<name>TPIS_MACFA</name>
<feature type="initiator methionine" description="Removed" evidence="4">
    <location>
        <position position="1"/>
    </location>
</feature>
<feature type="chain" id="PRO_0000090114" description="Triosephosphate isomerase">
    <location>
        <begin position="2"/>
        <end position="249"/>
    </location>
</feature>
<feature type="active site" description="Electrophile" evidence="5">
    <location>
        <position position="96"/>
    </location>
</feature>
<feature type="active site" description="Proton acceptor" evidence="5">
    <location>
        <position position="166"/>
    </location>
</feature>
<feature type="binding site" evidence="5">
    <location>
        <position position="12"/>
    </location>
    <ligand>
        <name>substrate</name>
    </ligand>
</feature>
<feature type="binding site" evidence="5">
    <location>
        <position position="14"/>
    </location>
    <ligand>
        <name>substrate</name>
    </ligand>
</feature>
<feature type="modified residue" description="N6-acetyllysine" evidence="4">
    <location>
        <position position="14"/>
    </location>
</feature>
<feature type="modified residue" description="3'-nitrotyrosine" evidence="2">
    <location>
        <position position="68"/>
    </location>
</feature>
<feature type="modified residue" description="Phosphoserine" evidence="4">
    <location>
        <position position="80"/>
    </location>
</feature>
<feature type="modified residue" description="Phosphoserine" evidence="3">
    <location>
        <position position="106"/>
    </location>
</feature>
<feature type="modified residue" description="N6-succinyllysine" evidence="2">
    <location>
        <position position="149"/>
    </location>
</feature>
<feature type="modified residue" description="N6-acetyllysine; alternate" evidence="2">
    <location>
        <position position="156"/>
    </location>
</feature>
<feature type="modified residue" description="N6-succinyllysine; alternate" evidence="2">
    <location>
        <position position="156"/>
    </location>
</feature>
<feature type="modified residue" description="Phosphoserine" evidence="2">
    <location>
        <position position="159"/>
    </location>
</feature>
<feature type="modified residue" description="Phosphothreonine" evidence="2">
    <location>
        <position position="173"/>
    </location>
</feature>
<feature type="modified residue" description="N6-acetyllysine; alternate" evidence="4">
    <location>
        <position position="194"/>
    </location>
</feature>
<feature type="modified residue" description="N6-methyllysine; alternate" evidence="4">
    <location>
        <position position="194"/>
    </location>
</feature>
<feature type="modified residue" description="N6-succinyllysine; alternate" evidence="2">
    <location>
        <position position="194"/>
    </location>
</feature>
<feature type="modified residue" description="Phosphoserine" evidence="3">
    <location>
        <position position="198"/>
    </location>
</feature>
<feature type="modified residue" description="3'-nitrotyrosine" evidence="2">
    <location>
        <position position="209"/>
    </location>
</feature>
<feature type="modified residue" description="Phosphoserine" evidence="4">
    <location>
        <position position="212"/>
    </location>
</feature>
<feature type="modified residue" description="Phosphothreonine" evidence="4">
    <location>
        <position position="214"/>
    </location>
</feature>
<feature type="modified residue" description="Phosphoserine" evidence="4">
    <location>
        <position position="223"/>
    </location>
</feature>
<feature type="modified residue" description="N6-acetyllysine" evidence="4">
    <location>
        <position position="238"/>
    </location>
</feature>
<feature type="cross-link" description="Glycyl lysine isopeptide (Lys-Gly) (interchain with G-Cter in SUMO1)" evidence="4">
    <location>
        <position position="142"/>
    </location>
</feature>
<accession>Q60HC9</accession>
<evidence type="ECO:0000250" key="1">
    <source>
        <dbReference type="UniProtKB" id="P00939"/>
    </source>
</evidence>
<evidence type="ECO:0000250" key="2">
    <source>
        <dbReference type="UniProtKB" id="P17751"/>
    </source>
</evidence>
<evidence type="ECO:0000250" key="3">
    <source>
        <dbReference type="UniProtKB" id="P48500"/>
    </source>
</evidence>
<evidence type="ECO:0000250" key="4">
    <source>
        <dbReference type="UniProtKB" id="P60174"/>
    </source>
</evidence>
<evidence type="ECO:0000255" key="5">
    <source>
        <dbReference type="PROSITE-ProRule" id="PRU10127"/>
    </source>
</evidence>
<evidence type="ECO:0000305" key="6"/>
<dbReference type="EC" id="5.3.1.1" evidence="5"/>
<dbReference type="EC" id="4.2.3.3" evidence="1"/>
<dbReference type="EMBL" id="AB125198">
    <property type="protein sequence ID" value="BAD51986.1"/>
    <property type="molecule type" value="mRNA"/>
</dbReference>
<dbReference type="RefSeq" id="NP_001306554.1">
    <property type="nucleotide sequence ID" value="NM_001319625.1"/>
</dbReference>
<dbReference type="SMR" id="Q60HC9"/>
<dbReference type="STRING" id="9541.ENSMFAP00000019612"/>
<dbReference type="eggNOG" id="KOG1643">
    <property type="taxonomic scope" value="Eukaryota"/>
</dbReference>
<dbReference type="UniPathway" id="UPA00109">
    <property type="reaction ID" value="UER00189"/>
</dbReference>
<dbReference type="UniPathway" id="UPA00138"/>
<dbReference type="Proteomes" id="UP000233100">
    <property type="component" value="Unplaced"/>
</dbReference>
<dbReference type="GO" id="GO:0005829">
    <property type="term" value="C:cytosol"/>
    <property type="evidence" value="ECO:0007669"/>
    <property type="project" value="TreeGrafter"/>
</dbReference>
<dbReference type="GO" id="GO:0008929">
    <property type="term" value="F:methylglyoxal synthase activity"/>
    <property type="evidence" value="ECO:0000250"/>
    <property type="project" value="UniProtKB"/>
</dbReference>
<dbReference type="GO" id="GO:0042803">
    <property type="term" value="F:protein homodimerization activity"/>
    <property type="evidence" value="ECO:0000250"/>
    <property type="project" value="UniProtKB"/>
</dbReference>
<dbReference type="GO" id="GO:0004807">
    <property type="term" value="F:triose-phosphate isomerase activity"/>
    <property type="evidence" value="ECO:0000250"/>
    <property type="project" value="UniProtKB"/>
</dbReference>
<dbReference type="GO" id="GO:0006094">
    <property type="term" value="P:gluconeogenesis"/>
    <property type="evidence" value="ECO:0007669"/>
    <property type="project" value="UniProtKB-UniPathway"/>
</dbReference>
<dbReference type="GO" id="GO:0046166">
    <property type="term" value="P:glyceraldehyde-3-phosphate biosynthetic process"/>
    <property type="evidence" value="ECO:0000250"/>
    <property type="project" value="UniProtKB"/>
</dbReference>
<dbReference type="GO" id="GO:0019563">
    <property type="term" value="P:glycerol catabolic process"/>
    <property type="evidence" value="ECO:0007669"/>
    <property type="project" value="TreeGrafter"/>
</dbReference>
<dbReference type="GO" id="GO:0006096">
    <property type="term" value="P:glycolytic process"/>
    <property type="evidence" value="ECO:0007669"/>
    <property type="project" value="UniProtKB-UniPathway"/>
</dbReference>
<dbReference type="GO" id="GO:0019242">
    <property type="term" value="P:methylglyoxal biosynthetic process"/>
    <property type="evidence" value="ECO:0000250"/>
    <property type="project" value="UniProtKB"/>
</dbReference>
<dbReference type="CDD" id="cd00311">
    <property type="entry name" value="TIM"/>
    <property type="match status" value="1"/>
</dbReference>
<dbReference type="FunFam" id="3.20.20.70:FF:000025">
    <property type="entry name" value="Triosephosphate isomerase"/>
    <property type="match status" value="1"/>
</dbReference>
<dbReference type="Gene3D" id="3.20.20.70">
    <property type="entry name" value="Aldolase class I"/>
    <property type="match status" value="1"/>
</dbReference>
<dbReference type="HAMAP" id="MF_00147_B">
    <property type="entry name" value="TIM_B"/>
    <property type="match status" value="1"/>
</dbReference>
<dbReference type="InterPro" id="IPR013785">
    <property type="entry name" value="Aldolase_TIM"/>
</dbReference>
<dbReference type="InterPro" id="IPR035990">
    <property type="entry name" value="TIM_sf"/>
</dbReference>
<dbReference type="InterPro" id="IPR022896">
    <property type="entry name" value="TrioseP_Isoase_bac/euk"/>
</dbReference>
<dbReference type="InterPro" id="IPR000652">
    <property type="entry name" value="Triosephosphate_isomerase"/>
</dbReference>
<dbReference type="InterPro" id="IPR020861">
    <property type="entry name" value="Triosephosphate_isomerase_AS"/>
</dbReference>
<dbReference type="NCBIfam" id="TIGR00419">
    <property type="entry name" value="tim"/>
    <property type="match status" value="1"/>
</dbReference>
<dbReference type="PANTHER" id="PTHR21139">
    <property type="entry name" value="TRIOSEPHOSPHATE ISOMERASE"/>
    <property type="match status" value="1"/>
</dbReference>
<dbReference type="PANTHER" id="PTHR21139:SF2">
    <property type="entry name" value="TRIOSEPHOSPHATE ISOMERASE"/>
    <property type="match status" value="1"/>
</dbReference>
<dbReference type="Pfam" id="PF00121">
    <property type="entry name" value="TIM"/>
    <property type="match status" value="1"/>
</dbReference>
<dbReference type="SUPFAM" id="SSF51351">
    <property type="entry name" value="Triosephosphate isomerase (TIM)"/>
    <property type="match status" value="1"/>
</dbReference>
<dbReference type="PROSITE" id="PS00171">
    <property type="entry name" value="TIM_1"/>
    <property type="match status" value="1"/>
</dbReference>
<dbReference type="PROSITE" id="PS51440">
    <property type="entry name" value="TIM_2"/>
    <property type="match status" value="1"/>
</dbReference>
<comment type="function">
    <text evidence="1">Triosephosphate isomerase is an extremely efficient metabolic enzyme that catalyzes the interconversion between dihydroxyacetone phosphate (DHAP) and D-glyceraldehyde-3-phosphate (G3P) in glycolysis and gluconeogenesis.</text>
</comment>
<comment type="function">
    <text evidence="1">It is also responsible for the non-negligible production of methylglyoxal a reactive cytotoxic side-product that modifies and can alter proteins, DNA and lipids.</text>
</comment>
<comment type="catalytic activity">
    <reaction evidence="1">
        <text>dihydroxyacetone phosphate = methylglyoxal + phosphate</text>
        <dbReference type="Rhea" id="RHEA:17937"/>
        <dbReference type="ChEBI" id="CHEBI:17158"/>
        <dbReference type="ChEBI" id="CHEBI:43474"/>
        <dbReference type="ChEBI" id="CHEBI:57642"/>
        <dbReference type="EC" id="4.2.3.3"/>
    </reaction>
</comment>
<comment type="catalytic activity">
    <reaction evidence="5">
        <text>D-glyceraldehyde 3-phosphate = dihydroxyacetone phosphate</text>
        <dbReference type="Rhea" id="RHEA:18585"/>
        <dbReference type="ChEBI" id="CHEBI:57642"/>
        <dbReference type="ChEBI" id="CHEBI:59776"/>
        <dbReference type="EC" id="5.3.1.1"/>
    </reaction>
</comment>
<comment type="pathway">
    <text evidence="5">Carbohydrate degradation; glycolysis; D-glyceraldehyde 3-phosphate from glycerone phosphate: step 1/1.</text>
</comment>
<comment type="pathway">
    <text evidence="5">Carbohydrate biosynthesis; gluconeogenesis.</text>
</comment>
<comment type="subunit">
    <text evidence="5">Homodimer.</text>
</comment>
<comment type="subcellular location">
    <subcellularLocation>
        <location evidence="5">Cytoplasm</location>
    </subcellularLocation>
</comment>
<comment type="similarity">
    <text evidence="6">Belongs to the triosephosphate isomerase family.</text>
</comment>
<organism>
    <name type="scientific">Macaca fascicularis</name>
    <name type="common">Crab-eating macaque</name>
    <name type="synonym">Cynomolgus monkey</name>
    <dbReference type="NCBI Taxonomy" id="9541"/>
    <lineage>
        <taxon>Eukaryota</taxon>
        <taxon>Metazoa</taxon>
        <taxon>Chordata</taxon>
        <taxon>Craniata</taxon>
        <taxon>Vertebrata</taxon>
        <taxon>Euteleostomi</taxon>
        <taxon>Mammalia</taxon>
        <taxon>Eutheria</taxon>
        <taxon>Euarchontoglires</taxon>
        <taxon>Primates</taxon>
        <taxon>Haplorrhini</taxon>
        <taxon>Catarrhini</taxon>
        <taxon>Cercopithecidae</taxon>
        <taxon>Cercopithecinae</taxon>
        <taxon>Macaca</taxon>
    </lineage>
</organism>
<reference key="1">
    <citation type="submission" date="2003-10" db="EMBL/GenBank/DDBJ databases">
        <title>Isolation and characterization of cDNA for macaque neurological disease genes.</title>
        <authorList>
            <person name="Kusuda J."/>
            <person name="Osada N."/>
            <person name="Tanuma R."/>
            <person name="Hirata M."/>
            <person name="Sugano S."/>
            <person name="Hashimoto K."/>
        </authorList>
    </citation>
    <scope>NUCLEOTIDE SEQUENCE [LARGE SCALE MRNA]</scope>
    <source>
        <tissue>Frontal cortex</tissue>
    </source>
</reference>
<gene>
    <name type="primary">TPI1</name>
    <name type="ORF">QflA-22315</name>
</gene>
<sequence>MAPSRKFFVGGNWKMNGRKQNLGELIGTLNAAKVPADTEVVCAPPTAYIDFARQKLDPKIAVAAQNCYKVTNGAFTGEISPGMIKDCGATWVVLGHSERRHVFGESDELIGQKVAHALAEGLGVIACIGEKLDEREAGITEKVVFEQTKVIADNVKDWSKVVLAYEPVWAIGTGKTATPQQAQEVHEKLRGWLKSNVSEAVAQSTRIIYGGSVTGATCKELASQPDVDGFLVGGASLKPEFVDIINAKQ</sequence>
<keyword id="KW-0007">Acetylation</keyword>
<keyword id="KW-0963">Cytoplasm</keyword>
<keyword id="KW-0312">Gluconeogenesis</keyword>
<keyword id="KW-0324">Glycolysis</keyword>
<keyword id="KW-0413">Isomerase</keyword>
<keyword id="KW-1017">Isopeptide bond</keyword>
<keyword id="KW-0456">Lyase</keyword>
<keyword id="KW-0488">Methylation</keyword>
<keyword id="KW-0944">Nitration</keyword>
<keyword id="KW-0597">Phosphoprotein</keyword>
<keyword id="KW-1185">Reference proteome</keyword>
<keyword id="KW-0832">Ubl conjugation</keyword>
<protein>
    <recommendedName>
        <fullName>Triosephosphate isomerase</fullName>
        <shortName>TIM</shortName>
        <ecNumber evidence="5">5.3.1.1</ecNumber>
    </recommendedName>
    <alternativeName>
        <fullName evidence="1">Methylglyoxal synthase</fullName>
        <ecNumber evidence="1">4.2.3.3</ecNumber>
    </alternativeName>
    <alternativeName>
        <fullName>Triose-phosphate isomerase</fullName>
    </alternativeName>
</protein>
<proteinExistence type="evidence at transcript level"/>